<protein>
    <recommendedName>
        <fullName evidence="1">Probable septum site-determining protein MinC</fullName>
    </recommendedName>
</protein>
<organism>
    <name type="scientific">Escherichia coli O1:K1 / APEC</name>
    <dbReference type="NCBI Taxonomy" id="405955"/>
    <lineage>
        <taxon>Bacteria</taxon>
        <taxon>Pseudomonadati</taxon>
        <taxon>Pseudomonadota</taxon>
        <taxon>Gammaproteobacteria</taxon>
        <taxon>Enterobacterales</taxon>
        <taxon>Enterobacteriaceae</taxon>
        <taxon>Escherichia</taxon>
    </lineage>
</organism>
<reference key="1">
    <citation type="journal article" date="2007" name="J. Bacteriol.">
        <title>The genome sequence of avian pathogenic Escherichia coli strain O1:K1:H7 shares strong similarities with human extraintestinal pathogenic E. coli genomes.</title>
        <authorList>
            <person name="Johnson T.J."/>
            <person name="Kariyawasam S."/>
            <person name="Wannemuehler Y."/>
            <person name="Mangiamele P."/>
            <person name="Johnson S.J."/>
            <person name="Doetkott C."/>
            <person name="Skyberg J.A."/>
            <person name="Lynne A.M."/>
            <person name="Johnson J.R."/>
            <person name="Nolan L.K."/>
        </authorList>
    </citation>
    <scope>NUCLEOTIDE SEQUENCE [LARGE SCALE GENOMIC DNA]</scope>
</reference>
<name>MINC_ECOK1</name>
<comment type="function">
    <text evidence="1">Cell division inhibitor that blocks the formation of polar Z ring septums. Rapidly oscillates between the poles of the cell to destabilize FtsZ filaments that have formed before they mature into polar Z rings. Prevents FtsZ polymerization.</text>
</comment>
<comment type="subunit">
    <text evidence="1">Interacts with MinD and FtsZ.</text>
</comment>
<comment type="similarity">
    <text evidence="1">Belongs to the MinC family.</text>
</comment>
<keyword id="KW-0131">Cell cycle</keyword>
<keyword id="KW-0132">Cell division</keyword>
<keyword id="KW-1185">Reference proteome</keyword>
<keyword id="KW-0717">Septation</keyword>
<sequence length="231" mass="24745">MSNTPIELKGSSFTLSVVHLHEAEPKVIHQALEDKIAQAPAFLKHAPVVLNVSALEDPVNWSAMHKAVSATGLRVIGVSGCKDAQLKAEIEKMGLPILTEGKEKAPRPAPAPQAPAQNTTPVTKTRLIDTPVRSGQRIYAPQCDLIVTSHVSAGAELIADGNIHVYGMMRGRALAGASGDRETQIFCTNLMAELVSIAGEYWLSDQIPAEFYGKAARLQLVENALTVQPLN</sequence>
<feature type="chain" id="PRO_1000047827" description="Probable septum site-determining protein MinC">
    <location>
        <begin position="1"/>
        <end position="231"/>
    </location>
</feature>
<feature type="region of interest" description="Disordered" evidence="2">
    <location>
        <begin position="102"/>
        <end position="125"/>
    </location>
</feature>
<proteinExistence type="inferred from homology"/>
<dbReference type="EMBL" id="CP000468">
    <property type="protein sequence ID" value="ABJ00590.1"/>
    <property type="molecule type" value="Genomic_DNA"/>
</dbReference>
<dbReference type="RefSeq" id="WP_000072536.1">
    <property type="nucleotide sequence ID" value="NZ_CADILS010000001.1"/>
</dbReference>
<dbReference type="SMR" id="A1AAA0"/>
<dbReference type="GeneID" id="93776258"/>
<dbReference type="KEGG" id="ecv:APECO1_289"/>
<dbReference type="HOGENOM" id="CLU_067812_0_1_6"/>
<dbReference type="Proteomes" id="UP000008216">
    <property type="component" value="Chromosome"/>
</dbReference>
<dbReference type="GO" id="GO:0000902">
    <property type="term" value="P:cell morphogenesis"/>
    <property type="evidence" value="ECO:0007669"/>
    <property type="project" value="InterPro"/>
</dbReference>
<dbReference type="GO" id="GO:0000917">
    <property type="term" value="P:division septum assembly"/>
    <property type="evidence" value="ECO:0007669"/>
    <property type="project" value="UniProtKB-KW"/>
</dbReference>
<dbReference type="GO" id="GO:0051302">
    <property type="term" value="P:regulation of cell division"/>
    <property type="evidence" value="ECO:0007669"/>
    <property type="project" value="InterPro"/>
</dbReference>
<dbReference type="GO" id="GO:1901891">
    <property type="term" value="P:regulation of cell septum assembly"/>
    <property type="evidence" value="ECO:0007669"/>
    <property type="project" value="InterPro"/>
</dbReference>
<dbReference type="FunFam" id="2.160.20.70:FF:000002">
    <property type="entry name" value="Probable septum site-determining protein MinC"/>
    <property type="match status" value="1"/>
</dbReference>
<dbReference type="Gene3D" id="2.160.20.70">
    <property type="match status" value="1"/>
</dbReference>
<dbReference type="Gene3D" id="3.30.70.260">
    <property type="match status" value="1"/>
</dbReference>
<dbReference type="HAMAP" id="MF_00267">
    <property type="entry name" value="MinC"/>
    <property type="match status" value="1"/>
</dbReference>
<dbReference type="InterPro" id="IPR016098">
    <property type="entry name" value="CAP/MinC_C"/>
</dbReference>
<dbReference type="InterPro" id="IPR013033">
    <property type="entry name" value="MinC"/>
</dbReference>
<dbReference type="InterPro" id="IPR036145">
    <property type="entry name" value="MinC_C_sf"/>
</dbReference>
<dbReference type="InterPro" id="IPR007874">
    <property type="entry name" value="MinC_N"/>
</dbReference>
<dbReference type="InterPro" id="IPR005526">
    <property type="entry name" value="Septum_form_inhib_MinC_C"/>
</dbReference>
<dbReference type="NCBIfam" id="TIGR01222">
    <property type="entry name" value="minC"/>
    <property type="match status" value="1"/>
</dbReference>
<dbReference type="PANTHER" id="PTHR34108">
    <property type="entry name" value="SEPTUM SITE-DETERMINING PROTEIN MINC"/>
    <property type="match status" value="1"/>
</dbReference>
<dbReference type="PANTHER" id="PTHR34108:SF1">
    <property type="entry name" value="SEPTUM SITE-DETERMINING PROTEIN MINC"/>
    <property type="match status" value="1"/>
</dbReference>
<dbReference type="Pfam" id="PF03775">
    <property type="entry name" value="MinC_C"/>
    <property type="match status" value="1"/>
</dbReference>
<dbReference type="Pfam" id="PF05209">
    <property type="entry name" value="MinC_N"/>
    <property type="match status" value="1"/>
</dbReference>
<dbReference type="SUPFAM" id="SSF63848">
    <property type="entry name" value="Cell-division inhibitor MinC, C-terminal domain"/>
    <property type="match status" value="1"/>
</dbReference>
<gene>
    <name evidence="1" type="primary">minC</name>
    <name type="ordered locus">Ecok1_10960</name>
    <name type="ORF">APECO1_289</name>
</gene>
<evidence type="ECO:0000255" key="1">
    <source>
        <dbReference type="HAMAP-Rule" id="MF_00267"/>
    </source>
</evidence>
<evidence type="ECO:0000256" key="2">
    <source>
        <dbReference type="SAM" id="MobiDB-lite"/>
    </source>
</evidence>
<accession>A1AAA0</accession>